<keyword id="KW-0963">Cytoplasm</keyword>
<keyword id="KW-0690">Ribosome biogenesis</keyword>
<dbReference type="EMBL" id="AE008923">
    <property type="protein sequence ID" value="AAM37533.1"/>
    <property type="molecule type" value="Genomic_DNA"/>
</dbReference>
<dbReference type="RefSeq" id="WP_011051765.1">
    <property type="nucleotide sequence ID" value="NC_003919.1"/>
</dbReference>
<dbReference type="SMR" id="Q8PJ56"/>
<dbReference type="GeneID" id="66911775"/>
<dbReference type="KEGG" id="xac:XAC2686"/>
<dbReference type="eggNOG" id="COG0858">
    <property type="taxonomic scope" value="Bacteria"/>
</dbReference>
<dbReference type="HOGENOM" id="CLU_089475_6_3_6"/>
<dbReference type="Proteomes" id="UP000000576">
    <property type="component" value="Chromosome"/>
</dbReference>
<dbReference type="GO" id="GO:0005829">
    <property type="term" value="C:cytosol"/>
    <property type="evidence" value="ECO:0007669"/>
    <property type="project" value="TreeGrafter"/>
</dbReference>
<dbReference type="GO" id="GO:0043024">
    <property type="term" value="F:ribosomal small subunit binding"/>
    <property type="evidence" value="ECO:0007669"/>
    <property type="project" value="TreeGrafter"/>
</dbReference>
<dbReference type="GO" id="GO:0030490">
    <property type="term" value="P:maturation of SSU-rRNA"/>
    <property type="evidence" value="ECO:0007669"/>
    <property type="project" value="UniProtKB-UniRule"/>
</dbReference>
<dbReference type="Gene3D" id="3.30.300.20">
    <property type="match status" value="1"/>
</dbReference>
<dbReference type="HAMAP" id="MF_00003">
    <property type="entry name" value="RbfA"/>
    <property type="match status" value="1"/>
</dbReference>
<dbReference type="InterPro" id="IPR015946">
    <property type="entry name" value="KH_dom-like_a/b"/>
</dbReference>
<dbReference type="InterPro" id="IPR000238">
    <property type="entry name" value="RbfA"/>
</dbReference>
<dbReference type="InterPro" id="IPR023799">
    <property type="entry name" value="RbfA_dom_sf"/>
</dbReference>
<dbReference type="InterPro" id="IPR020053">
    <property type="entry name" value="Ribosome-bd_factorA_CS"/>
</dbReference>
<dbReference type="NCBIfam" id="TIGR00082">
    <property type="entry name" value="rbfA"/>
    <property type="match status" value="1"/>
</dbReference>
<dbReference type="PANTHER" id="PTHR33515">
    <property type="entry name" value="RIBOSOME-BINDING FACTOR A, CHLOROPLASTIC-RELATED"/>
    <property type="match status" value="1"/>
</dbReference>
<dbReference type="PANTHER" id="PTHR33515:SF1">
    <property type="entry name" value="RIBOSOME-BINDING FACTOR A, CHLOROPLASTIC-RELATED"/>
    <property type="match status" value="1"/>
</dbReference>
<dbReference type="Pfam" id="PF02033">
    <property type="entry name" value="RBFA"/>
    <property type="match status" value="1"/>
</dbReference>
<dbReference type="SUPFAM" id="SSF89919">
    <property type="entry name" value="Ribosome-binding factor A, RbfA"/>
    <property type="match status" value="1"/>
</dbReference>
<dbReference type="PROSITE" id="PS01319">
    <property type="entry name" value="RBFA"/>
    <property type="match status" value="1"/>
</dbReference>
<feature type="chain" id="PRO_0000102772" description="Ribosome-binding factor A">
    <location>
        <begin position="1"/>
        <end position="130"/>
    </location>
</feature>
<feature type="region of interest" description="Disordered" evidence="2">
    <location>
        <begin position="111"/>
        <end position="130"/>
    </location>
</feature>
<name>RBFA_XANAC</name>
<protein>
    <recommendedName>
        <fullName evidence="1">Ribosome-binding factor A</fullName>
    </recommendedName>
</protein>
<sequence length="130" mass="14537">MPTKSFHRTDRVSAQVRRDLGTIVHAAVRDNGLPSVSVSDVEISRDLAHAKVFVTALQQERSAEAVKGLKEIAGQLRTQLARAMKLRHVPELHFHYDDSVDRGERIDNLLRDLDDVGPEATSSDEDAEQR</sequence>
<accession>Q8PJ56</accession>
<reference key="1">
    <citation type="journal article" date="2002" name="Nature">
        <title>Comparison of the genomes of two Xanthomonas pathogens with differing host specificities.</title>
        <authorList>
            <person name="da Silva A.C.R."/>
            <person name="Ferro J.A."/>
            <person name="Reinach F.C."/>
            <person name="Farah C.S."/>
            <person name="Furlan L.R."/>
            <person name="Quaggio R.B."/>
            <person name="Monteiro-Vitorello C.B."/>
            <person name="Van Sluys M.A."/>
            <person name="Almeida N.F. Jr."/>
            <person name="Alves L.M.C."/>
            <person name="do Amaral A.M."/>
            <person name="Bertolini M.C."/>
            <person name="Camargo L.E.A."/>
            <person name="Camarotte G."/>
            <person name="Cannavan F."/>
            <person name="Cardozo J."/>
            <person name="Chambergo F."/>
            <person name="Ciapina L.P."/>
            <person name="Cicarelli R.M.B."/>
            <person name="Coutinho L.L."/>
            <person name="Cursino-Santos J.R."/>
            <person name="El-Dorry H."/>
            <person name="Faria J.B."/>
            <person name="Ferreira A.J.S."/>
            <person name="Ferreira R.C.C."/>
            <person name="Ferro M.I.T."/>
            <person name="Formighieri E.F."/>
            <person name="Franco M.C."/>
            <person name="Greggio C.C."/>
            <person name="Gruber A."/>
            <person name="Katsuyama A.M."/>
            <person name="Kishi L.T."/>
            <person name="Leite R.P."/>
            <person name="Lemos E.G.M."/>
            <person name="Lemos M.V.F."/>
            <person name="Locali E.C."/>
            <person name="Machado M.A."/>
            <person name="Madeira A.M.B.N."/>
            <person name="Martinez-Rossi N.M."/>
            <person name="Martins E.C."/>
            <person name="Meidanis J."/>
            <person name="Menck C.F.M."/>
            <person name="Miyaki C.Y."/>
            <person name="Moon D.H."/>
            <person name="Moreira L.M."/>
            <person name="Novo M.T.M."/>
            <person name="Okura V.K."/>
            <person name="Oliveira M.C."/>
            <person name="Oliveira V.R."/>
            <person name="Pereira H.A."/>
            <person name="Rossi A."/>
            <person name="Sena J.A.D."/>
            <person name="Silva C."/>
            <person name="de Souza R.F."/>
            <person name="Spinola L.A.F."/>
            <person name="Takita M.A."/>
            <person name="Tamura R.E."/>
            <person name="Teixeira E.C."/>
            <person name="Tezza R.I.D."/>
            <person name="Trindade dos Santos M."/>
            <person name="Truffi D."/>
            <person name="Tsai S.M."/>
            <person name="White F.F."/>
            <person name="Setubal J.C."/>
            <person name="Kitajima J.P."/>
        </authorList>
    </citation>
    <scope>NUCLEOTIDE SEQUENCE [LARGE SCALE GENOMIC DNA]</scope>
    <source>
        <strain>306</strain>
    </source>
</reference>
<evidence type="ECO:0000255" key="1">
    <source>
        <dbReference type="HAMAP-Rule" id="MF_00003"/>
    </source>
</evidence>
<evidence type="ECO:0000256" key="2">
    <source>
        <dbReference type="SAM" id="MobiDB-lite"/>
    </source>
</evidence>
<comment type="function">
    <text evidence="1">One of several proteins that assist in the late maturation steps of the functional core of the 30S ribosomal subunit. Associates with free 30S ribosomal subunits (but not with 30S subunits that are part of 70S ribosomes or polysomes). Required for efficient processing of 16S rRNA. May interact with the 5'-terminal helix region of 16S rRNA.</text>
</comment>
<comment type="subunit">
    <text evidence="1">Monomer. Binds 30S ribosomal subunits, but not 50S ribosomal subunits or 70S ribosomes.</text>
</comment>
<comment type="subcellular location">
    <subcellularLocation>
        <location evidence="1">Cytoplasm</location>
    </subcellularLocation>
</comment>
<comment type="similarity">
    <text evidence="1">Belongs to the RbfA family.</text>
</comment>
<organism>
    <name type="scientific">Xanthomonas axonopodis pv. citri (strain 306)</name>
    <dbReference type="NCBI Taxonomy" id="190486"/>
    <lineage>
        <taxon>Bacteria</taxon>
        <taxon>Pseudomonadati</taxon>
        <taxon>Pseudomonadota</taxon>
        <taxon>Gammaproteobacteria</taxon>
        <taxon>Lysobacterales</taxon>
        <taxon>Lysobacteraceae</taxon>
        <taxon>Xanthomonas</taxon>
    </lineage>
</organism>
<proteinExistence type="inferred from homology"/>
<gene>
    <name evidence="1" type="primary">rbfA</name>
    <name type="ordered locus">XAC2686</name>
</gene>